<reference key="1">
    <citation type="journal article" date="1998" name="Gene">
        <title>Molecular analysis of a novel protein kinase in maturing rice seed.</title>
        <authorList>
            <person name="Hotta H."/>
            <person name="Aoki N."/>
            <person name="Matsuda T."/>
            <person name="Adachi T."/>
        </authorList>
    </citation>
    <scope>NUCLEOTIDE SEQUENCE [GENOMIC DNA]</scope>
    <scope>TISSUE SPECIFICITY</scope>
    <scope>AUTOPHOSPHORYLATION</scope>
    <source>
        <strain>cv. IR36</strain>
        <tissue>Endosperm</tissue>
        <tissue>Seed</tissue>
    </source>
</reference>
<reference key="2">
    <citation type="journal article" date="2005" name="PLoS Biol.">
        <title>The genomes of Oryza sativa: a history of duplications.</title>
        <authorList>
            <person name="Yu J."/>
            <person name="Wang J."/>
            <person name="Lin W."/>
            <person name="Li S."/>
            <person name="Li H."/>
            <person name="Zhou J."/>
            <person name="Ni P."/>
            <person name="Dong W."/>
            <person name="Hu S."/>
            <person name="Zeng C."/>
            <person name="Zhang J."/>
            <person name="Zhang Y."/>
            <person name="Li R."/>
            <person name="Xu Z."/>
            <person name="Li S."/>
            <person name="Li X."/>
            <person name="Zheng H."/>
            <person name="Cong L."/>
            <person name="Lin L."/>
            <person name="Yin J."/>
            <person name="Geng J."/>
            <person name="Li G."/>
            <person name="Shi J."/>
            <person name="Liu J."/>
            <person name="Lv H."/>
            <person name="Li J."/>
            <person name="Wang J."/>
            <person name="Deng Y."/>
            <person name="Ran L."/>
            <person name="Shi X."/>
            <person name="Wang X."/>
            <person name="Wu Q."/>
            <person name="Li C."/>
            <person name="Ren X."/>
            <person name="Wang J."/>
            <person name="Wang X."/>
            <person name="Li D."/>
            <person name="Liu D."/>
            <person name="Zhang X."/>
            <person name="Ji Z."/>
            <person name="Zhao W."/>
            <person name="Sun Y."/>
            <person name="Zhang Z."/>
            <person name="Bao J."/>
            <person name="Han Y."/>
            <person name="Dong L."/>
            <person name="Ji J."/>
            <person name="Chen P."/>
            <person name="Wu S."/>
            <person name="Liu J."/>
            <person name="Xiao Y."/>
            <person name="Bu D."/>
            <person name="Tan J."/>
            <person name="Yang L."/>
            <person name="Ye C."/>
            <person name="Zhang J."/>
            <person name="Xu J."/>
            <person name="Zhou Y."/>
            <person name="Yu Y."/>
            <person name="Zhang B."/>
            <person name="Zhuang S."/>
            <person name="Wei H."/>
            <person name="Liu B."/>
            <person name="Lei M."/>
            <person name="Yu H."/>
            <person name="Li Y."/>
            <person name="Xu H."/>
            <person name="Wei S."/>
            <person name="He X."/>
            <person name="Fang L."/>
            <person name="Zhang Z."/>
            <person name="Zhang Y."/>
            <person name="Huang X."/>
            <person name="Su Z."/>
            <person name="Tong W."/>
            <person name="Li J."/>
            <person name="Tong Z."/>
            <person name="Li S."/>
            <person name="Ye J."/>
            <person name="Wang L."/>
            <person name="Fang L."/>
            <person name="Lei T."/>
            <person name="Chen C.-S."/>
            <person name="Chen H.-C."/>
            <person name="Xu Z."/>
            <person name="Li H."/>
            <person name="Huang H."/>
            <person name="Zhang F."/>
            <person name="Xu H."/>
            <person name="Li N."/>
            <person name="Zhao C."/>
            <person name="Li S."/>
            <person name="Dong L."/>
            <person name="Huang Y."/>
            <person name="Li L."/>
            <person name="Xi Y."/>
            <person name="Qi Q."/>
            <person name="Li W."/>
            <person name="Zhang B."/>
            <person name="Hu W."/>
            <person name="Zhang Y."/>
            <person name="Tian X."/>
            <person name="Jiao Y."/>
            <person name="Liang X."/>
            <person name="Jin J."/>
            <person name="Gao L."/>
            <person name="Zheng W."/>
            <person name="Hao B."/>
            <person name="Liu S.-M."/>
            <person name="Wang W."/>
            <person name="Yuan L."/>
            <person name="Cao M."/>
            <person name="McDermott J."/>
            <person name="Samudrala R."/>
            <person name="Wang J."/>
            <person name="Wong G.K.-S."/>
            <person name="Yang H."/>
        </authorList>
    </citation>
    <scope>NUCLEOTIDE SEQUENCE [LARGE SCALE GENOMIC DNA]</scope>
    <source>
        <strain>cv. 93-11</strain>
    </source>
</reference>
<reference key="3">
    <citation type="journal article" date="2004" name="Plant Cell">
        <title>Differential activation of the rice sucrose nonfermenting1-related protein kinase2 family by hyperosmotic stress and abscisic acid.</title>
        <authorList>
            <person name="Kobayashi Y."/>
            <person name="Yamamoto S."/>
            <person name="Minami H."/>
            <person name="Kagaya Y."/>
            <person name="Hattori T."/>
        </authorList>
    </citation>
    <scope>NOMENCLATURE</scope>
</reference>
<comment type="function">
    <text evidence="1">May play a role in signal transduction of hyperosmotic response.</text>
</comment>
<comment type="catalytic activity">
    <reaction>
        <text>L-seryl-[protein] + ATP = O-phospho-L-seryl-[protein] + ADP + H(+)</text>
        <dbReference type="Rhea" id="RHEA:17989"/>
        <dbReference type="Rhea" id="RHEA-COMP:9863"/>
        <dbReference type="Rhea" id="RHEA-COMP:11604"/>
        <dbReference type="ChEBI" id="CHEBI:15378"/>
        <dbReference type="ChEBI" id="CHEBI:29999"/>
        <dbReference type="ChEBI" id="CHEBI:30616"/>
        <dbReference type="ChEBI" id="CHEBI:83421"/>
        <dbReference type="ChEBI" id="CHEBI:456216"/>
        <dbReference type="EC" id="2.7.11.1"/>
    </reaction>
</comment>
<comment type="catalytic activity">
    <reaction>
        <text>L-threonyl-[protein] + ATP = O-phospho-L-threonyl-[protein] + ADP + H(+)</text>
        <dbReference type="Rhea" id="RHEA:46608"/>
        <dbReference type="Rhea" id="RHEA-COMP:11060"/>
        <dbReference type="Rhea" id="RHEA-COMP:11605"/>
        <dbReference type="ChEBI" id="CHEBI:15378"/>
        <dbReference type="ChEBI" id="CHEBI:30013"/>
        <dbReference type="ChEBI" id="CHEBI:30616"/>
        <dbReference type="ChEBI" id="CHEBI:61977"/>
        <dbReference type="ChEBI" id="CHEBI:456216"/>
        <dbReference type="EC" id="2.7.11.1"/>
    </reaction>
</comment>
<comment type="activity regulation">
    <text evidence="1">Activated by phosphorylation.</text>
</comment>
<comment type="subcellular location">
    <subcellularLocation>
        <location evidence="2">Cytoplasm</location>
    </subcellularLocation>
    <subcellularLocation>
        <location evidence="2">Nucleus</location>
    </subcellularLocation>
</comment>
<comment type="tissue specificity">
    <text evidence="5">Expressed in leaves and maturing seeds, but not in roots and stems of field-grown plants.</text>
</comment>
<comment type="PTM">
    <text>Autophosphorylated in presence of Ca(2+).</text>
</comment>
<comment type="similarity">
    <text evidence="3">Belongs to the protein kinase superfamily. Ser/Thr protein kinase family.</text>
</comment>
<keyword id="KW-0938">Abscisic acid signaling pathway</keyword>
<keyword id="KW-0067">ATP-binding</keyword>
<keyword id="KW-0963">Cytoplasm</keyword>
<keyword id="KW-0418">Kinase</keyword>
<keyword id="KW-0547">Nucleotide-binding</keyword>
<keyword id="KW-0539">Nucleus</keyword>
<keyword id="KW-0597">Phosphoprotein</keyword>
<keyword id="KW-1185">Reference proteome</keyword>
<keyword id="KW-0723">Serine/threonine-protein kinase</keyword>
<keyword id="KW-0808">Transferase</keyword>
<sequence length="334" mass="37871">MEERYEALKELGAGNFGVARLVRDKRSKELVAVKYIERGKKIDENVQREIINHRSLRHPNIIRFKEVCLTPTHLAIVMEYAAGGELFEQICTAGRFSEDEARYFFQQLISGVSYCHSLEICHRDLKLENTLLDGSPTPRVKICDFGYSKSALLHSKPKSTVGTPAYIAPEVLSRKEYDGKVADVWSCGVTLYVMLVGSYPFEDPGDPRNFRKTISRILGVQYSIPDYVRVSSDCRRLLSQIFVADPSKRITIPEIKKHTWFLKNLPKEISEREKADYKDTDAAPPTQAVEEIMRIIQEAKVPGDMAAADPALLAELAELKSDDEEEAADEYDTY</sequence>
<organism>
    <name type="scientific">Oryza sativa subsp. indica</name>
    <name type="common">Rice</name>
    <dbReference type="NCBI Taxonomy" id="39946"/>
    <lineage>
        <taxon>Eukaryota</taxon>
        <taxon>Viridiplantae</taxon>
        <taxon>Streptophyta</taxon>
        <taxon>Embryophyta</taxon>
        <taxon>Tracheophyta</taxon>
        <taxon>Spermatophyta</taxon>
        <taxon>Magnoliopsida</taxon>
        <taxon>Liliopsida</taxon>
        <taxon>Poales</taxon>
        <taxon>Poaceae</taxon>
        <taxon>BOP clade</taxon>
        <taxon>Oryzoideae</taxon>
        <taxon>Oryzeae</taxon>
        <taxon>Oryzinae</taxon>
        <taxon>Oryza</taxon>
        <taxon>Oryza sativa</taxon>
    </lineage>
</organism>
<name>SAPK3_ORYSI</name>
<evidence type="ECO:0000250" key="1"/>
<evidence type="ECO:0000250" key="2">
    <source>
        <dbReference type="UniProtKB" id="P0C5D6"/>
    </source>
</evidence>
<evidence type="ECO:0000255" key="3">
    <source>
        <dbReference type="PROSITE-ProRule" id="PRU00159"/>
    </source>
</evidence>
<evidence type="ECO:0000255" key="4">
    <source>
        <dbReference type="PROSITE-ProRule" id="PRU10027"/>
    </source>
</evidence>
<evidence type="ECO:0000269" key="5">
    <source>
    </source>
</evidence>
<evidence type="ECO:0000305" key="6"/>
<evidence type="ECO:0000312" key="7">
    <source>
        <dbReference type="EMBL" id="EEC67453.1"/>
    </source>
</evidence>
<dbReference type="EC" id="2.7.11.1"/>
<dbReference type="EMBL" id="AB002109">
    <property type="protein sequence ID" value="BAA19573.1"/>
    <property type="molecule type" value="Genomic_DNA"/>
</dbReference>
<dbReference type="EMBL" id="CM000135">
    <property type="protein sequence ID" value="EEC67453.1"/>
    <property type="molecule type" value="Genomic_DNA"/>
</dbReference>
<dbReference type="PIR" id="T03403">
    <property type="entry name" value="T03403"/>
</dbReference>
<dbReference type="SMR" id="A2ZAB5"/>
<dbReference type="STRING" id="39946.A2ZAB5"/>
<dbReference type="EnsemblPlants" id="BGIOSGA031386-TA">
    <property type="protein sequence ID" value="BGIOSGA031386-PA"/>
    <property type="gene ID" value="BGIOSGA031386"/>
</dbReference>
<dbReference type="Gramene" id="BGIOSGA031386-TA">
    <property type="protein sequence ID" value="BGIOSGA031386-PA"/>
    <property type="gene ID" value="BGIOSGA031386"/>
</dbReference>
<dbReference type="HOGENOM" id="CLU_000288_63_0_1"/>
<dbReference type="OMA" id="HVMLCAS"/>
<dbReference type="Proteomes" id="UP000007015">
    <property type="component" value="Chromosome 10"/>
</dbReference>
<dbReference type="GO" id="GO:0005737">
    <property type="term" value="C:cytoplasm"/>
    <property type="evidence" value="ECO:0007669"/>
    <property type="project" value="UniProtKB-SubCell"/>
</dbReference>
<dbReference type="GO" id="GO:0005634">
    <property type="term" value="C:nucleus"/>
    <property type="evidence" value="ECO:0007669"/>
    <property type="project" value="UniProtKB-SubCell"/>
</dbReference>
<dbReference type="GO" id="GO:0005524">
    <property type="term" value="F:ATP binding"/>
    <property type="evidence" value="ECO:0007669"/>
    <property type="project" value="UniProtKB-KW"/>
</dbReference>
<dbReference type="GO" id="GO:0106310">
    <property type="term" value="F:protein serine kinase activity"/>
    <property type="evidence" value="ECO:0007669"/>
    <property type="project" value="RHEA"/>
</dbReference>
<dbReference type="GO" id="GO:0004674">
    <property type="term" value="F:protein serine/threonine kinase activity"/>
    <property type="evidence" value="ECO:0007669"/>
    <property type="project" value="UniProtKB-KW"/>
</dbReference>
<dbReference type="GO" id="GO:0009738">
    <property type="term" value="P:abscisic acid-activated signaling pathway"/>
    <property type="evidence" value="ECO:0007669"/>
    <property type="project" value="UniProtKB-KW"/>
</dbReference>
<dbReference type="CDD" id="cd14662">
    <property type="entry name" value="STKc_SnRK2"/>
    <property type="match status" value="1"/>
</dbReference>
<dbReference type="FunFam" id="1.10.510.10:FF:000085">
    <property type="entry name" value="Serine/threonine-protein kinase SRK2E"/>
    <property type="match status" value="1"/>
</dbReference>
<dbReference type="FunFam" id="3.30.200.20:FF:000045">
    <property type="entry name" value="Serine/threonine-protein kinase SRK2E"/>
    <property type="match status" value="1"/>
</dbReference>
<dbReference type="Gene3D" id="3.30.200.20">
    <property type="entry name" value="Phosphorylase Kinase, domain 1"/>
    <property type="match status" value="1"/>
</dbReference>
<dbReference type="Gene3D" id="1.10.510.10">
    <property type="entry name" value="Transferase(Phosphotransferase) domain 1"/>
    <property type="match status" value="1"/>
</dbReference>
<dbReference type="InterPro" id="IPR011009">
    <property type="entry name" value="Kinase-like_dom_sf"/>
</dbReference>
<dbReference type="InterPro" id="IPR000719">
    <property type="entry name" value="Prot_kinase_dom"/>
</dbReference>
<dbReference type="InterPro" id="IPR017441">
    <property type="entry name" value="Protein_kinase_ATP_BS"/>
</dbReference>
<dbReference type="InterPro" id="IPR008271">
    <property type="entry name" value="Ser/Thr_kinase_AS"/>
</dbReference>
<dbReference type="PANTHER" id="PTHR24343:SF558">
    <property type="entry name" value="PROTEIN KINASE DOMAIN-CONTAINING PROTEIN"/>
    <property type="match status" value="1"/>
</dbReference>
<dbReference type="PANTHER" id="PTHR24343">
    <property type="entry name" value="SERINE/THREONINE KINASE"/>
    <property type="match status" value="1"/>
</dbReference>
<dbReference type="Pfam" id="PF00069">
    <property type="entry name" value="Pkinase"/>
    <property type="match status" value="1"/>
</dbReference>
<dbReference type="SMART" id="SM00220">
    <property type="entry name" value="S_TKc"/>
    <property type="match status" value="1"/>
</dbReference>
<dbReference type="SUPFAM" id="SSF56112">
    <property type="entry name" value="Protein kinase-like (PK-like)"/>
    <property type="match status" value="1"/>
</dbReference>
<dbReference type="PROSITE" id="PS00107">
    <property type="entry name" value="PROTEIN_KINASE_ATP"/>
    <property type="match status" value="1"/>
</dbReference>
<dbReference type="PROSITE" id="PS50011">
    <property type="entry name" value="PROTEIN_KINASE_DOM"/>
    <property type="match status" value="1"/>
</dbReference>
<dbReference type="PROSITE" id="PS00108">
    <property type="entry name" value="PROTEIN_KINASE_ST"/>
    <property type="match status" value="1"/>
</dbReference>
<feature type="chain" id="PRO_0000301653" description="Serine/threonine-protein kinase SAPK3">
    <location>
        <begin position="1"/>
        <end position="334"/>
    </location>
</feature>
<feature type="domain" description="Protein kinase" evidence="3">
    <location>
        <begin position="5"/>
        <end position="261"/>
    </location>
</feature>
<feature type="active site" description="Proton acceptor" evidence="3 4">
    <location>
        <position position="124"/>
    </location>
</feature>
<feature type="binding site" evidence="3">
    <location>
        <begin position="11"/>
        <end position="19"/>
    </location>
    <ligand>
        <name>ATP</name>
        <dbReference type="ChEBI" id="CHEBI:30616"/>
    </ligand>
</feature>
<feature type="binding site" evidence="3">
    <location>
        <position position="34"/>
    </location>
    <ligand>
        <name>ATP</name>
        <dbReference type="ChEBI" id="CHEBI:30616"/>
    </ligand>
</feature>
<feature type="sequence conflict" description="In Ref. 1; BAA19573." evidence="6" ref="1">
    <original>E</original>
    <variation>D</variation>
    <location>
        <position position="100"/>
    </location>
</feature>
<feature type="sequence conflict" description="In Ref. 1; BAA19573." evidence="6" ref="1">
    <original>A</original>
    <variation>G</variation>
    <location>
        <position position="299"/>
    </location>
</feature>
<gene>
    <name type="primary">SAPK3</name>
    <name type="synonym">REK</name>
    <name evidence="7" type="ORF">OsI_34678</name>
</gene>
<proteinExistence type="evidence at protein level"/>
<protein>
    <recommendedName>
        <fullName>Serine/threonine-protein kinase SAPK3</fullName>
        <ecNumber>2.7.11.1</ecNumber>
    </recommendedName>
    <alternativeName>
        <fullName>Osmotic stress/abscisic acid-activated protein kinase 3</fullName>
    </alternativeName>
    <alternativeName>
        <fullName>Protein kinase REK</fullName>
    </alternativeName>
</protein>
<accession>A2ZAB5</accession>
<accession>B8BIA0</accession>
<accession>O04062</accession>
<accession>O24189</accession>
<accession>Q0IVL6</accession>
<accession>Q75V63</accession>
<accession>Q7XC29</accession>
<accession>Q9AY41</accession>